<proteinExistence type="evidence at protein level"/>
<name>ORLIK_ARATH</name>
<dbReference type="EMBL" id="AP002030">
    <property type="protein sequence ID" value="BAA98202.1"/>
    <property type="status" value="ALT_SEQ"/>
    <property type="molecule type" value="Genomic_DNA"/>
</dbReference>
<dbReference type="EMBL" id="CP002688">
    <property type="protein sequence ID" value="AED90974.1"/>
    <property type="molecule type" value="Genomic_DNA"/>
</dbReference>
<dbReference type="EMBL" id="AY072147">
    <property type="protein sequence ID" value="AAL59969.1"/>
    <property type="molecule type" value="mRNA"/>
</dbReference>
<dbReference type="EMBL" id="AY133750">
    <property type="protein sequence ID" value="AAM91684.1"/>
    <property type="molecule type" value="mRNA"/>
</dbReference>
<dbReference type="RefSeq" id="NP_196231.2">
    <molecule id="Q8VYD8-1"/>
    <property type="nucleotide sequence ID" value="NM_120695.5"/>
</dbReference>
<dbReference type="SMR" id="Q8VYD8"/>
<dbReference type="FunCoup" id="Q8VYD8">
    <property type="interactions" value="702"/>
</dbReference>
<dbReference type="STRING" id="3702.Q8VYD8"/>
<dbReference type="PaxDb" id="3702-AT5G06130.2"/>
<dbReference type="EnsemblPlants" id="AT5G06130.2">
    <molecule id="Q8VYD8-1"/>
    <property type="protein sequence ID" value="AT5G06130.2"/>
    <property type="gene ID" value="AT5G06130"/>
</dbReference>
<dbReference type="GeneID" id="830500"/>
<dbReference type="Gramene" id="AT5G06130.2">
    <molecule id="Q8VYD8-1"/>
    <property type="protein sequence ID" value="AT5G06130.2"/>
    <property type="gene ID" value="AT5G06130"/>
</dbReference>
<dbReference type="KEGG" id="ath:AT5G06130"/>
<dbReference type="Araport" id="AT5G06130"/>
<dbReference type="TAIR" id="AT5G06130">
    <property type="gene designation" value="ATOR-LIKE"/>
</dbReference>
<dbReference type="eggNOG" id="ENOG502QSP0">
    <property type="taxonomic scope" value="Eukaryota"/>
</dbReference>
<dbReference type="InParanoid" id="Q8VYD8"/>
<dbReference type="PhylomeDB" id="Q8VYD8"/>
<dbReference type="PRO" id="PR:Q8VYD8"/>
<dbReference type="Proteomes" id="UP000006548">
    <property type="component" value="Chromosome 5"/>
</dbReference>
<dbReference type="ExpressionAtlas" id="Q8VYD8">
    <property type="expression patterns" value="baseline and differential"/>
</dbReference>
<dbReference type="GO" id="GO:0031969">
    <property type="term" value="C:chloroplast membrane"/>
    <property type="evidence" value="ECO:0000314"/>
    <property type="project" value="UniProtKB"/>
</dbReference>
<dbReference type="GO" id="GO:0008270">
    <property type="term" value="F:zinc ion binding"/>
    <property type="evidence" value="ECO:0007669"/>
    <property type="project" value="UniProtKB-KW"/>
</dbReference>
<dbReference type="GO" id="GO:1904143">
    <property type="term" value="P:positive regulation of carotenoid biosynthetic process"/>
    <property type="evidence" value="ECO:0000316"/>
    <property type="project" value="TAIR"/>
</dbReference>
<dbReference type="GO" id="GO:0050821">
    <property type="term" value="P:protein stabilization"/>
    <property type="evidence" value="ECO:0000316"/>
    <property type="project" value="TAIR"/>
</dbReference>
<dbReference type="PANTHER" id="PTHR15852">
    <property type="entry name" value="PLASTID TRANSCRIPTIONALLY ACTIVE PROTEIN"/>
    <property type="match status" value="1"/>
</dbReference>
<dbReference type="PANTHER" id="PTHR15852:SF8">
    <property type="entry name" value="PROTEIN ORANGE-LIKE, CHLOROPLASTIC"/>
    <property type="match status" value="1"/>
</dbReference>
<comment type="function">
    <text evidence="6">May be associated with accumulation of carotenoids in chromoplasts.</text>
</comment>
<comment type="subunit">
    <text evidence="3">Interacts with PSY1.</text>
</comment>
<comment type="subcellular location">
    <subcellularLocation>
        <location evidence="3">Plastid</location>
        <location evidence="3">Chloroplast membrane</location>
    </subcellularLocation>
</comment>
<comment type="alternative products">
    <event type="alternative splicing"/>
    <isoform>
        <id>Q8VYD8-1</id>
        <name>1</name>
        <sequence type="displayed"/>
    </isoform>
    <text evidence="5">A number of isoforms are produced. According to EST sequences.</text>
</comment>
<comment type="similarity">
    <text>Belongs to the orange-like family.</text>
</comment>
<comment type="sequence caution" evidence="5">
    <conflict type="erroneous gene model prediction">
        <sequence resource="EMBL-CDS" id="BAA98202"/>
    </conflict>
</comment>
<accession>Q8VYD8</accession>
<accession>Q9LHS3</accession>
<reference key="1">
    <citation type="submission" date="2000-05" db="EMBL/GenBank/DDBJ databases">
        <title>Structural analysis of Arabidopsis thaliana chromosome 5. XI.</title>
        <authorList>
            <person name="Kaneko T."/>
            <person name="Katoh T."/>
            <person name="Asamizu E."/>
            <person name="Sato S."/>
            <person name="Nakamura Y."/>
            <person name="Kotani H."/>
            <person name="Tabata S."/>
        </authorList>
    </citation>
    <scope>NUCLEOTIDE SEQUENCE [LARGE SCALE GENOMIC DNA]</scope>
    <source>
        <strain>cv. Columbia</strain>
    </source>
</reference>
<reference key="2">
    <citation type="journal article" date="2017" name="Plant J.">
        <title>Araport11: a complete reannotation of the Arabidopsis thaliana reference genome.</title>
        <authorList>
            <person name="Cheng C.Y."/>
            <person name="Krishnakumar V."/>
            <person name="Chan A.P."/>
            <person name="Thibaud-Nissen F."/>
            <person name="Schobel S."/>
            <person name="Town C.D."/>
        </authorList>
    </citation>
    <scope>GENOME REANNOTATION</scope>
    <source>
        <strain>cv. Columbia</strain>
    </source>
</reference>
<reference key="3">
    <citation type="journal article" date="2003" name="Science">
        <title>Empirical analysis of transcriptional activity in the Arabidopsis genome.</title>
        <authorList>
            <person name="Yamada K."/>
            <person name="Lim J."/>
            <person name="Dale J.M."/>
            <person name="Chen H."/>
            <person name="Shinn P."/>
            <person name="Palm C.J."/>
            <person name="Southwick A.M."/>
            <person name="Wu H.C."/>
            <person name="Kim C.J."/>
            <person name="Nguyen M."/>
            <person name="Pham P.K."/>
            <person name="Cheuk R.F."/>
            <person name="Karlin-Newmann G."/>
            <person name="Liu S.X."/>
            <person name="Lam B."/>
            <person name="Sakano H."/>
            <person name="Wu T."/>
            <person name="Yu G."/>
            <person name="Miranda M."/>
            <person name="Quach H.L."/>
            <person name="Tripp M."/>
            <person name="Chang C.H."/>
            <person name="Lee J.M."/>
            <person name="Toriumi M.J."/>
            <person name="Chan M.M."/>
            <person name="Tang C.C."/>
            <person name="Onodera C.S."/>
            <person name="Deng J.M."/>
            <person name="Akiyama K."/>
            <person name="Ansari Y."/>
            <person name="Arakawa T."/>
            <person name="Banh J."/>
            <person name="Banno F."/>
            <person name="Bowser L."/>
            <person name="Brooks S.Y."/>
            <person name="Carninci P."/>
            <person name="Chao Q."/>
            <person name="Choy N."/>
            <person name="Enju A."/>
            <person name="Goldsmith A.D."/>
            <person name="Gurjal M."/>
            <person name="Hansen N.F."/>
            <person name="Hayashizaki Y."/>
            <person name="Johnson-Hopson C."/>
            <person name="Hsuan V.W."/>
            <person name="Iida K."/>
            <person name="Karnes M."/>
            <person name="Khan S."/>
            <person name="Koesema E."/>
            <person name="Ishida J."/>
            <person name="Jiang P.X."/>
            <person name="Jones T."/>
            <person name="Kawai J."/>
            <person name="Kamiya A."/>
            <person name="Meyers C."/>
            <person name="Nakajima M."/>
            <person name="Narusaka M."/>
            <person name="Seki M."/>
            <person name="Sakurai T."/>
            <person name="Satou M."/>
            <person name="Tamse R."/>
            <person name="Vaysberg M."/>
            <person name="Wallender E.K."/>
            <person name="Wong C."/>
            <person name="Yamamura Y."/>
            <person name="Yuan S."/>
            <person name="Shinozaki K."/>
            <person name="Davis R.W."/>
            <person name="Theologis A."/>
            <person name="Ecker J.R."/>
        </authorList>
    </citation>
    <scope>NUCLEOTIDE SEQUENCE [LARGE SCALE MRNA]</scope>
    <source>
        <strain>cv. Columbia</strain>
    </source>
</reference>
<reference key="4">
    <citation type="journal article" date="2015" name="Plant Physiol.">
        <title>A single amino acid substitution in an ORANGE protein promotes carotenoid overaccumulation in Arabidopsis.</title>
        <authorList>
            <person name="Yuan H."/>
            <person name="Owsiany K."/>
            <person name="Sheeja T.E."/>
            <person name="Zhou X."/>
            <person name="Rodriguez C."/>
            <person name="Li Y."/>
            <person name="Welsch R."/>
            <person name="Chayut N."/>
            <person name="Yang Y."/>
            <person name="Thannhauser T.W."/>
            <person name="Parthasarathy M.V."/>
            <person name="Xu Q."/>
            <person name="Deng X."/>
            <person name="Fei Z."/>
            <person name="Schaffer A."/>
            <person name="Katzir N."/>
            <person name="Burger J."/>
            <person name="Tadmor Y."/>
            <person name="Li L."/>
        </authorList>
    </citation>
    <scope>FUNCTION</scope>
    <scope>MUTAGENESIS OF ARG-97</scope>
</reference>
<reference key="5">
    <citation type="journal article" date="2015" name="Proc. Natl. Acad. Sci. U.S.A.">
        <title>Arabidopsis OR proteins are the major posttranscriptional regulators of phytoene synthase in controlling carotenoid biosynthesis.</title>
        <authorList>
            <person name="Zhou X."/>
            <person name="Welsch R."/>
            <person name="Yang Y."/>
            <person name="Alvarez D."/>
            <person name="Riediger M."/>
            <person name="Yuan H."/>
            <person name="Fish T."/>
            <person name="Liu J."/>
            <person name="Thannhauser T.W."/>
            <person name="Li L."/>
        </authorList>
    </citation>
    <scope>INTERACTION WITH PSY1</scope>
    <scope>SUBCELLULAR LOCATION</scope>
</reference>
<organism>
    <name type="scientific">Arabidopsis thaliana</name>
    <name type="common">Mouse-ear cress</name>
    <dbReference type="NCBI Taxonomy" id="3702"/>
    <lineage>
        <taxon>Eukaryota</taxon>
        <taxon>Viridiplantae</taxon>
        <taxon>Streptophyta</taxon>
        <taxon>Embryophyta</taxon>
        <taxon>Tracheophyta</taxon>
        <taxon>Spermatophyta</taxon>
        <taxon>Magnoliopsida</taxon>
        <taxon>eudicotyledons</taxon>
        <taxon>Gunneridae</taxon>
        <taxon>Pentapetalae</taxon>
        <taxon>rosids</taxon>
        <taxon>malvids</taxon>
        <taxon>Brassicales</taxon>
        <taxon>Brassicaceae</taxon>
        <taxon>Camelineae</taxon>
        <taxon>Arabidopsis</taxon>
    </lineage>
</organism>
<keyword id="KW-0025">Alternative splicing</keyword>
<keyword id="KW-0150">Chloroplast</keyword>
<keyword id="KW-0472">Membrane</keyword>
<keyword id="KW-0479">Metal-binding</keyword>
<keyword id="KW-0934">Plastid</keyword>
<keyword id="KW-1185">Reference proteome</keyword>
<keyword id="KW-0677">Repeat</keyword>
<keyword id="KW-0809">Transit peptide</keyword>
<keyword id="KW-0812">Transmembrane</keyword>
<keyword id="KW-1133">Transmembrane helix</keyword>
<keyword id="KW-0862">Zinc</keyword>
<keyword id="KW-0863">Zinc-finger</keyword>
<sequence>MTCFSSATPHRHHLLLSSPSTSKSLLRFPSSYLKPSPSLLFHGSSRSLLSCSDGSNNRPPPSGDTVPNNFCIIEGSETVQDFVQMQLQEIQDNIRSRRNKIFLLMEEVRRLRVQQRIKSVKAINEDSELEATEMPEITSSIPFLPNVTPKTLKQLYSTSVALISGIIFFGGLIAPNLELKVGLGGTSYEDFIRSLHLPLQLSQVDPIVASFSGGAVGVISTLMLIEVNNVKQQEKKRCKYCLGTGYLPCARCSASGVCLSIDPITRPRATNQLMQVATTKRCLNCSGAGKVMCPTCLCTGMVTASEHDPRFDPFD</sequence>
<evidence type="ECO:0000255" key="1"/>
<evidence type="ECO:0000255" key="2">
    <source>
        <dbReference type="PROSITE-ProRule" id="PRU00546"/>
    </source>
</evidence>
<evidence type="ECO:0000269" key="3">
    <source>
    </source>
</evidence>
<evidence type="ECO:0000269" key="4">
    <source>
    </source>
</evidence>
<evidence type="ECO:0000305" key="5"/>
<evidence type="ECO:0000305" key="6">
    <source>
    </source>
</evidence>
<evidence type="ECO:0000312" key="7">
    <source>
        <dbReference type="Araport" id="AT5G06130"/>
    </source>
</evidence>
<gene>
    <name type="primary">ORLIKE</name>
    <name evidence="7" type="ordered locus">At5g06130</name>
</gene>
<protein>
    <recommendedName>
        <fullName evidence="5">Protein ORANGE-LIKE, chloroplastic</fullName>
    </recommendedName>
    <alternativeName>
        <fullName evidence="5">DnaJ-like cysteine-rich domain-containing protein Or-like</fullName>
    </alternativeName>
</protein>
<feature type="transit peptide" description="Chloroplast" evidence="5">
    <location>
        <begin position="1"/>
        <end position="16"/>
    </location>
</feature>
<feature type="chain" id="PRO_0000438013" description="Protein ORANGE-LIKE, chloroplastic">
    <location>
        <begin position="17"/>
        <end position="315"/>
    </location>
</feature>
<feature type="transmembrane region" description="Helical" evidence="1">
    <location>
        <begin position="155"/>
        <end position="175"/>
    </location>
</feature>
<feature type="transmembrane region" description="Helical" evidence="1">
    <location>
        <begin position="207"/>
        <end position="227"/>
    </location>
</feature>
<feature type="repeat" description="CXXCXGXG motif" evidence="5">
    <location>
        <begin position="238"/>
        <end position="245"/>
    </location>
</feature>
<feature type="repeat" description="CXXCXXXG motif" evidence="5">
    <location>
        <begin position="249"/>
        <end position="256"/>
    </location>
</feature>
<feature type="repeat" description="CXXCXGXG motif" evidence="5">
    <location>
        <begin position="282"/>
        <end position="289"/>
    </location>
</feature>
<feature type="repeat" description="CXXCXXXG motif" evidence="5">
    <location>
        <begin position="293"/>
        <end position="300"/>
    </location>
</feature>
<feature type="zinc finger region" description="CR-type" evidence="2">
    <location>
        <begin position="225"/>
        <end position="307"/>
    </location>
</feature>
<feature type="mutagenesis site" description="No effect on the accumulation of carotenoids." evidence="4">
    <original>R</original>
    <variation>H</variation>
    <location>
        <position position="97"/>
    </location>
</feature>